<organism>
    <name type="scientific">Oryza sativa subsp. japonica</name>
    <name type="common">Rice</name>
    <dbReference type="NCBI Taxonomy" id="39947"/>
    <lineage>
        <taxon>Eukaryota</taxon>
        <taxon>Viridiplantae</taxon>
        <taxon>Streptophyta</taxon>
        <taxon>Embryophyta</taxon>
        <taxon>Tracheophyta</taxon>
        <taxon>Spermatophyta</taxon>
        <taxon>Magnoliopsida</taxon>
        <taxon>Liliopsida</taxon>
        <taxon>Poales</taxon>
        <taxon>Poaceae</taxon>
        <taxon>BOP clade</taxon>
        <taxon>Oryzoideae</taxon>
        <taxon>Oryzeae</taxon>
        <taxon>Oryzinae</taxon>
        <taxon>Oryza</taxon>
        <taxon>Oryza sativa</taxon>
    </lineage>
</organism>
<name>NAC26_ORYSJ</name>
<comment type="function">
    <text evidence="5">Transcription factor that acts redundantly with NAC20 to regulate the expression of genes involved in the biosynthesis of starch and storage proteins in grain (PubMed:32989010). Directly binds to the promoters of starch synthase 1 (SS1), pullulanase (PUL), glutelin A1 (GLUA1), glutelins B4 and B5 (GLUB4 and GLUB5), alpha-globulin and 16 kDa prolamin, and activates their expression (PubMed:32989010).</text>
</comment>
<comment type="subunit">
    <text evidence="4 5">Forms homodimers (PubMed:32989010). Forms heterodimers with NAC20 (PubMed:27872632, PubMed:32989010). Forms heterodimers with NAC23 (PubMed:27872632).</text>
</comment>
<comment type="subcellular location">
    <subcellularLocation>
        <location evidence="1 4 5">Nucleus</location>
    </subcellularLocation>
</comment>
<comment type="alternative products">
    <event type="alternative splicing"/>
    <isoform>
        <id>Q5VNK1-1</id>
        <name>1</name>
        <sequence type="displayed"/>
    </isoform>
    <isoform>
        <id>Q5VNK1-2</id>
        <name>2</name>
        <sequence type="described" ref="VSP_061037"/>
    </isoform>
</comment>
<comment type="tissue specificity">
    <text evidence="3 4 5">Expressed in developing seeds (PubMed:27872632). Expressed in developing endosperm (PubMed:18813954, PubMed:32989010).</text>
</comment>
<comment type="domain">
    <text evidence="1">The NAC domain includes a DNA binding domain and a dimerization domain.</text>
</comment>
<comment type="disruption phenotype">
    <text evidence="5">No visible phenotype under normal growth conditions (PubMed:32989010). The double mutant nac20 and nac26 exhibit a floury grain phenotype due to decreased starch and storage protein content (PubMed:32989010).</text>
</comment>
<gene>
    <name evidence="6" type="primary">NAC26</name>
    <name evidence="8" type="synonym">DLN11</name>
    <name evidence="10" type="ordered locus">Os01g0393100</name>
    <name evidence="8" type="ordered locus">LOC_Os01g29840</name>
    <name evidence="9" type="ORF">B1109A06.36</name>
</gene>
<feature type="chain" id="PRO_0000452674" description="NAC domain-containing protein 26">
    <location>
        <begin position="1"/>
        <end position="333"/>
    </location>
</feature>
<feature type="domain" description="NAC" evidence="1">
    <location>
        <begin position="14"/>
        <end position="173"/>
    </location>
</feature>
<feature type="DNA-binding region" evidence="1">
    <location>
        <begin position="114"/>
        <end position="179"/>
    </location>
</feature>
<feature type="region of interest" description="Disordered" evidence="2">
    <location>
        <begin position="143"/>
        <end position="162"/>
    </location>
</feature>
<feature type="compositionally biased region" description="Pro residues" evidence="2">
    <location>
        <begin position="147"/>
        <end position="157"/>
    </location>
</feature>
<feature type="splice variant" id="VSP_061037" description="In isoform 2." evidence="8">
    <original>DAADQNNAADISSVACNMDATIWKY</original>
    <variation>ATWTLPSGSTDTYIHTYIHT</variation>
    <location>
        <begin position="309"/>
        <end position="333"/>
    </location>
</feature>
<keyword id="KW-0025">Alternative splicing</keyword>
<keyword id="KW-0238">DNA-binding</keyword>
<keyword id="KW-0539">Nucleus</keyword>
<keyword id="KW-1185">Reference proteome</keyword>
<keyword id="KW-0804">Transcription</keyword>
<keyword id="KW-0805">Transcription regulation</keyword>
<dbReference type="EMBL" id="EU846995">
    <property type="protein sequence ID" value="ACJ54899.1"/>
    <property type="molecule type" value="mRNA"/>
</dbReference>
<dbReference type="EMBL" id="AP004610">
    <property type="protein sequence ID" value="BAD68974.1"/>
    <property type="molecule type" value="Genomic_DNA"/>
</dbReference>
<dbReference type="EMBL" id="AP008207">
    <property type="protein sequence ID" value="BAF05033.1"/>
    <property type="molecule type" value="Genomic_DNA"/>
</dbReference>
<dbReference type="EMBL" id="AP014957">
    <property type="protein sequence ID" value="BAS72293.1"/>
    <property type="molecule type" value="Genomic_DNA"/>
</dbReference>
<dbReference type="RefSeq" id="XP_015629856.1">
    <molecule id="Q5VNK1-1"/>
    <property type="nucleotide sequence ID" value="XM_015774370.1"/>
</dbReference>
<dbReference type="SMR" id="Q5VNK1"/>
<dbReference type="FunCoup" id="Q5VNK1">
    <property type="interactions" value="3"/>
</dbReference>
<dbReference type="STRING" id="39947.Q5VNK1"/>
<dbReference type="PaxDb" id="39947-Q5VNK1"/>
<dbReference type="EnsemblPlants" id="Os01t0393100-02">
    <molecule id="Q5VNK1-1"/>
    <property type="protein sequence ID" value="Os01t0393100-02"/>
    <property type="gene ID" value="Os01g0393100"/>
</dbReference>
<dbReference type="Gramene" id="Os01t0393100-02">
    <molecule id="Q5VNK1-1"/>
    <property type="protein sequence ID" value="Os01t0393100-02"/>
    <property type="gene ID" value="Os01g0393100"/>
</dbReference>
<dbReference type="KEGG" id="dosa:Os01g0393100"/>
<dbReference type="KEGG" id="osa:4324532"/>
<dbReference type="eggNOG" id="ENOG502QSPY">
    <property type="taxonomic scope" value="Eukaryota"/>
</dbReference>
<dbReference type="HOGENOM" id="CLU_035664_6_0_1"/>
<dbReference type="InParanoid" id="Q5VNK1"/>
<dbReference type="OMA" id="ECHPRSE"/>
<dbReference type="OrthoDB" id="1424968at2759"/>
<dbReference type="Proteomes" id="UP000000763">
    <property type="component" value="Chromosome 1"/>
</dbReference>
<dbReference type="Proteomes" id="UP000059680">
    <property type="component" value="Chromosome 1"/>
</dbReference>
<dbReference type="GO" id="GO:0005634">
    <property type="term" value="C:nucleus"/>
    <property type="evidence" value="ECO:0000314"/>
    <property type="project" value="UniProtKB"/>
</dbReference>
<dbReference type="GO" id="GO:0003677">
    <property type="term" value="F:DNA binding"/>
    <property type="evidence" value="ECO:0007669"/>
    <property type="project" value="UniProtKB-KW"/>
</dbReference>
<dbReference type="GO" id="GO:0042803">
    <property type="term" value="F:protein homodimerization activity"/>
    <property type="evidence" value="ECO:0000314"/>
    <property type="project" value="UniProtKB"/>
</dbReference>
<dbReference type="GO" id="GO:0045893">
    <property type="term" value="P:positive regulation of DNA-templated transcription"/>
    <property type="evidence" value="ECO:0000314"/>
    <property type="project" value="UniProtKB"/>
</dbReference>
<dbReference type="GO" id="GO:2000014">
    <property type="term" value="P:regulation of endosperm development"/>
    <property type="evidence" value="ECO:0000314"/>
    <property type="project" value="UniProtKB"/>
</dbReference>
<dbReference type="FunFam" id="2.170.150.80:FF:000006">
    <property type="entry name" value="NAC domain-containing protein 100-like"/>
    <property type="match status" value="1"/>
</dbReference>
<dbReference type="Gene3D" id="2.170.150.80">
    <property type="entry name" value="NAC domain"/>
    <property type="match status" value="1"/>
</dbReference>
<dbReference type="InterPro" id="IPR003441">
    <property type="entry name" value="NAC-dom"/>
</dbReference>
<dbReference type="InterPro" id="IPR036093">
    <property type="entry name" value="NAC_dom_sf"/>
</dbReference>
<dbReference type="PANTHER" id="PTHR31744:SF92">
    <property type="entry name" value="NAC DOMAIN-CONTAINING PROTEIN 87"/>
    <property type="match status" value="1"/>
</dbReference>
<dbReference type="PANTHER" id="PTHR31744">
    <property type="entry name" value="PROTEIN CUP-SHAPED COTYLEDON 2-RELATED"/>
    <property type="match status" value="1"/>
</dbReference>
<dbReference type="Pfam" id="PF02365">
    <property type="entry name" value="NAM"/>
    <property type="match status" value="1"/>
</dbReference>
<dbReference type="SUPFAM" id="SSF101941">
    <property type="entry name" value="NAC domain"/>
    <property type="match status" value="1"/>
</dbReference>
<dbReference type="PROSITE" id="PS51005">
    <property type="entry name" value="NAC"/>
    <property type="match status" value="1"/>
</dbReference>
<accession>Q5VNK1</accession>
<accession>Q0JMJ5</accession>
<protein>
    <recommendedName>
        <fullName evidence="6">NAC domain-containing protein 26</fullName>
        <shortName evidence="6">ONAC026</shortName>
        <shortName evidence="7">OsNAC26</shortName>
    </recommendedName>
</protein>
<sequence length="333" mass="37383">MGEQQQQVERQPDLPPGFRFHPTDEEIITFYLAPKVVDSRGFCVAAIGEVDLNKCEPWDLPGKAKMNGEKEWYFYCQKDRKYPTGMRTNRATEAGYWKATGKDKEIFRNHHMLIGMKKTLVFYKGRAPKGDKTNWVMHEYRLADASPPQPPPPPSSAEPPRQDDWAVCRIFHKSSGIKKPVQVPMQMPMQMQMPVAHQVPAANYQQQMAMASASIIQVPMQMQMPSMSDQLQMLDDFSTGSLMAPPPPPPSYSTLPGFPLQINGGAQQFVGNPSMYYQQQQQQQQQQMDMAAGGFVVSEPSSLVVSPQDAADQNNAADISSVACNMDATIWKY</sequence>
<reference key="1">
    <citation type="submission" date="2008-06" db="EMBL/GenBank/DDBJ databases">
        <title>Molecular cloning of NAC gene in rice.</title>
        <authorList>
            <person name="Yoon U.H."/>
            <person name="Kim Y.H."/>
        </authorList>
    </citation>
    <scope>NUCLEOTIDE SEQUENCE [MRNA] (ISOFORM 2)</scope>
</reference>
<reference key="2">
    <citation type="journal article" date="2002" name="Nature">
        <title>The genome sequence and structure of rice chromosome 1.</title>
        <authorList>
            <person name="Sasaki T."/>
            <person name="Matsumoto T."/>
            <person name="Yamamoto K."/>
            <person name="Sakata K."/>
            <person name="Baba T."/>
            <person name="Katayose Y."/>
            <person name="Wu J."/>
            <person name="Niimura Y."/>
            <person name="Cheng Z."/>
            <person name="Nagamura Y."/>
            <person name="Antonio B.A."/>
            <person name="Kanamori H."/>
            <person name="Hosokawa S."/>
            <person name="Masukawa M."/>
            <person name="Arikawa K."/>
            <person name="Chiden Y."/>
            <person name="Hayashi M."/>
            <person name="Okamoto M."/>
            <person name="Ando T."/>
            <person name="Aoki H."/>
            <person name="Arita K."/>
            <person name="Hamada M."/>
            <person name="Harada C."/>
            <person name="Hijishita S."/>
            <person name="Honda M."/>
            <person name="Ichikawa Y."/>
            <person name="Idonuma A."/>
            <person name="Iijima M."/>
            <person name="Ikeda M."/>
            <person name="Ikeno M."/>
            <person name="Ito S."/>
            <person name="Ito T."/>
            <person name="Ito Y."/>
            <person name="Ito Y."/>
            <person name="Iwabuchi A."/>
            <person name="Kamiya K."/>
            <person name="Karasawa W."/>
            <person name="Katagiri S."/>
            <person name="Kikuta A."/>
            <person name="Kobayashi N."/>
            <person name="Kono I."/>
            <person name="Machita K."/>
            <person name="Maehara T."/>
            <person name="Mizuno H."/>
            <person name="Mizubayashi T."/>
            <person name="Mukai Y."/>
            <person name="Nagasaki H."/>
            <person name="Nakashima M."/>
            <person name="Nakama Y."/>
            <person name="Nakamichi Y."/>
            <person name="Nakamura M."/>
            <person name="Namiki N."/>
            <person name="Negishi M."/>
            <person name="Ohta I."/>
            <person name="Ono N."/>
            <person name="Saji S."/>
            <person name="Sakai K."/>
            <person name="Shibata M."/>
            <person name="Shimokawa T."/>
            <person name="Shomura A."/>
            <person name="Song J."/>
            <person name="Takazaki Y."/>
            <person name="Terasawa K."/>
            <person name="Tsuji K."/>
            <person name="Waki K."/>
            <person name="Yamagata H."/>
            <person name="Yamane H."/>
            <person name="Yoshiki S."/>
            <person name="Yoshihara R."/>
            <person name="Yukawa K."/>
            <person name="Zhong H."/>
            <person name="Iwama H."/>
            <person name="Endo T."/>
            <person name="Ito H."/>
            <person name="Hahn J.H."/>
            <person name="Kim H.-I."/>
            <person name="Eun M.-Y."/>
            <person name="Yano M."/>
            <person name="Jiang J."/>
            <person name="Gojobori T."/>
        </authorList>
    </citation>
    <scope>NUCLEOTIDE SEQUENCE [LARGE SCALE GENOMIC DNA]</scope>
    <source>
        <strain>cv. Nipponbare</strain>
    </source>
</reference>
<reference key="3">
    <citation type="journal article" date="2005" name="Nature">
        <title>The map-based sequence of the rice genome.</title>
        <authorList>
            <consortium name="International rice genome sequencing project (IRGSP)"/>
        </authorList>
    </citation>
    <scope>NUCLEOTIDE SEQUENCE [LARGE SCALE GENOMIC DNA]</scope>
    <source>
        <strain>cv. Nipponbare</strain>
    </source>
</reference>
<reference key="4">
    <citation type="journal article" date="2008" name="Nucleic Acids Res.">
        <title>The rice annotation project database (RAP-DB): 2008 update.</title>
        <authorList>
            <consortium name="The rice annotation project (RAP)"/>
        </authorList>
    </citation>
    <scope>GENOME REANNOTATION</scope>
    <source>
        <strain>cv. Nipponbare</strain>
    </source>
</reference>
<reference key="5">
    <citation type="journal article" date="2013" name="Rice">
        <title>Improvement of the Oryza sativa Nipponbare reference genome using next generation sequence and optical map data.</title>
        <authorList>
            <person name="Kawahara Y."/>
            <person name="de la Bastide M."/>
            <person name="Hamilton J.P."/>
            <person name="Kanamori H."/>
            <person name="McCombie W.R."/>
            <person name="Ouyang S."/>
            <person name="Schwartz D.C."/>
            <person name="Tanaka T."/>
            <person name="Wu J."/>
            <person name="Zhou S."/>
            <person name="Childs K.L."/>
            <person name="Davidson R.M."/>
            <person name="Lin H."/>
            <person name="Quesada-Ocampo L."/>
            <person name="Vaillancourt B."/>
            <person name="Sakai H."/>
            <person name="Lee S.S."/>
            <person name="Kim J."/>
            <person name="Numa H."/>
            <person name="Itoh T."/>
            <person name="Buell C.R."/>
            <person name="Matsumoto T."/>
        </authorList>
    </citation>
    <scope>GENOME REANNOTATION</scope>
    <source>
        <strain>cv. Nipponbare</strain>
    </source>
</reference>
<reference key="6">
    <citation type="journal article" date="2003" name="DNA Res.">
        <title>Comprehensive analysis of NAC family genes in Oryza sativa and Arabidopsis thaliana.</title>
        <authorList>
            <person name="Ooka H."/>
            <person name="Satoh K."/>
            <person name="Doi K."/>
            <person name="Nagata T."/>
            <person name="Otomo Y."/>
            <person name="Murakami K."/>
            <person name="Matsubara K."/>
            <person name="Osato N."/>
            <person name="Kawai J."/>
            <person name="Carninci P."/>
            <person name="Hayashizaki Y."/>
            <person name="Suzuki K."/>
            <person name="Kojima K."/>
            <person name="Takahara Y."/>
            <person name="Yamamoto K."/>
            <person name="Kikuchi S."/>
        </authorList>
    </citation>
    <scope>GENE FAMILY</scope>
    <scope>NOMENCLATURE</scope>
</reference>
<reference key="7">
    <citation type="journal article" date="2008" name="Mol. Genet. Genomics">
        <title>Systematic sequence analysis and identification of tissue-specific or stress-responsive genes of NAC transcription factor family in rice.</title>
        <authorList>
            <person name="Fang Y."/>
            <person name="You J."/>
            <person name="Xie K."/>
            <person name="Xie W."/>
            <person name="Xiong L."/>
        </authorList>
    </citation>
    <scope>TISSUE SPECIFICITY</scope>
</reference>
<reference key="8">
    <citation type="journal article" date="2016" name="Front. Plant Sci.">
        <title>Three rice NAC transcription factors heteromerize and are associated with seed size.</title>
        <authorList>
            <person name="Mathew I.E."/>
            <person name="Das S."/>
            <person name="Mahto A."/>
            <person name="Agarwal P."/>
        </authorList>
    </citation>
    <scope>INTERACTION WITH NAC20 AND NAC23</scope>
    <scope>SUBCELLULAR LOCATION</scope>
    <scope>TISSUE SPECIFICITY</scope>
</reference>
<reference key="9">
    <citation type="journal article" date="2020" name="Plant Physiol.">
        <title>The NAC transcription factors OsNAC20 and OsNAC26 regulate starch and storage protein synthesis.</title>
        <authorList>
            <person name="Wang J."/>
            <person name="Chen Z."/>
            <person name="Zhang Q."/>
            <person name="Meng S."/>
            <person name="Wei C."/>
        </authorList>
    </citation>
    <scope>FUNCTION</scope>
    <scope>INTERACTION WITH NAC20</scope>
    <scope>SUBCELLULAR LOCATION</scope>
    <scope>TISSUE SPECIFICITY</scope>
    <scope>DISRUPTION PHENOTYPE</scope>
</reference>
<evidence type="ECO:0000255" key="1">
    <source>
        <dbReference type="PROSITE-ProRule" id="PRU00353"/>
    </source>
</evidence>
<evidence type="ECO:0000256" key="2">
    <source>
        <dbReference type="SAM" id="MobiDB-lite"/>
    </source>
</evidence>
<evidence type="ECO:0000269" key="3">
    <source>
    </source>
</evidence>
<evidence type="ECO:0000269" key="4">
    <source>
    </source>
</evidence>
<evidence type="ECO:0000269" key="5">
    <source>
    </source>
</evidence>
<evidence type="ECO:0000303" key="6">
    <source>
    </source>
</evidence>
<evidence type="ECO:0000303" key="7">
    <source>
    </source>
</evidence>
<evidence type="ECO:0000305" key="8"/>
<evidence type="ECO:0000312" key="9">
    <source>
        <dbReference type="EMBL" id="BAD68974.1"/>
    </source>
</evidence>
<evidence type="ECO:0000312" key="10">
    <source>
        <dbReference type="EMBL" id="BAS72293.1"/>
    </source>
</evidence>
<proteinExistence type="evidence at protein level"/>